<feature type="chain" id="PRO_0000128486" description="Small ribosomal subunit protein uS17">
    <location>
        <begin position="1"/>
        <end position="86"/>
    </location>
</feature>
<dbReference type="EMBL" id="AF126060">
    <property type="protein sequence ID" value="AAD33274.1"/>
    <property type="molecule type" value="Genomic_DNA"/>
</dbReference>
<dbReference type="EMBL" id="AF126061">
    <property type="protein sequence ID" value="AAD33283.1"/>
    <property type="molecule type" value="Genomic_DNA"/>
</dbReference>
<dbReference type="EMBL" id="AE005672">
    <property type="protein sequence ID" value="AAK74398.1"/>
    <property type="molecule type" value="Genomic_DNA"/>
</dbReference>
<dbReference type="PIR" id="E95025">
    <property type="entry name" value="E95025"/>
</dbReference>
<dbReference type="RefSeq" id="WP_000440801.1">
    <property type="nucleotide sequence ID" value="NZ_CP155539.1"/>
</dbReference>
<dbReference type="SMR" id="P0A4B3"/>
<dbReference type="PaxDb" id="170187-SP_0218"/>
<dbReference type="EnsemblBacteria" id="AAK74398">
    <property type="protein sequence ID" value="AAK74398"/>
    <property type="gene ID" value="SP_0218"/>
</dbReference>
<dbReference type="GeneID" id="93920913"/>
<dbReference type="KEGG" id="spn:SP_0218"/>
<dbReference type="eggNOG" id="COG0186">
    <property type="taxonomic scope" value="Bacteria"/>
</dbReference>
<dbReference type="PhylomeDB" id="P0A4B3"/>
<dbReference type="BioCyc" id="SPNE170187:G1FZB-223-MONOMER"/>
<dbReference type="Proteomes" id="UP000000585">
    <property type="component" value="Chromosome"/>
</dbReference>
<dbReference type="GO" id="GO:0022627">
    <property type="term" value="C:cytosolic small ribosomal subunit"/>
    <property type="evidence" value="ECO:0007669"/>
    <property type="project" value="TreeGrafter"/>
</dbReference>
<dbReference type="GO" id="GO:0019843">
    <property type="term" value="F:rRNA binding"/>
    <property type="evidence" value="ECO:0007669"/>
    <property type="project" value="UniProtKB-UniRule"/>
</dbReference>
<dbReference type="GO" id="GO:0003735">
    <property type="term" value="F:structural constituent of ribosome"/>
    <property type="evidence" value="ECO:0007669"/>
    <property type="project" value="InterPro"/>
</dbReference>
<dbReference type="GO" id="GO:0006412">
    <property type="term" value="P:translation"/>
    <property type="evidence" value="ECO:0007669"/>
    <property type="project" value="UniProtKB-UniRule"/>
</dbReference>
<dbReference type="CDD" id="cd00364">
    <property type="entry name" value="Ribosomal_uS17"/>
    <property type="match status" value="1"/>
</dbReference>
<dbReference type="FunFam" id="2.40.50.140:FF:000026">
    <property type="entry name" value="30S ribosomal protein S17"/>
    <property type="match status" value="1"/>
</dbReference>
<dbReference type="Gene3D" id="2.40.50.140">
    <property type="entry name" value="Nucleic acid-binding proteins"/>
    <property type="match status" value="1"/>
</dbReference>
<dbReference type="HAMAP" id="MF_01345_B">
    <property type="entry name" value="Ribosomal_uS17_B"/>
    <property type="match status" value="1"/>
</dbReference>
<dbReference type="InterPro" id="IPR012340">
    <property type="entry name" value="NA-bd_OB-fold"/>
</dbReference>
<dbReference type="InterPro" id="IPR000266">
    <property type="entry name" value="Ribosomal_uS17"/>
</dbReference>
<dbReference type="InterPro" id="IPR019984">
    <property type="entry name" value="Ribosomal_uS17_bact/chlr"/>
</dbReference>
<dbReference type="InterPro" id="IPR019979">
    <property type="entry name" value="Ribosomal_uS17_CS"/>
</dbReference>
<dbReference type="NCBIfam" id="NF004123">
    <property type="entry name" value="PRK05610.1"/>
    <property type="match status" value="1"/>
</dbReference>
<dbReference type="NCBIfam" id="TIGR03635">
    <property type="entry name" value="uS17_bact"/>
    <property type="match status" value="1"/>
</dbReference>
<dbReference type="PANTHER" id="PTHR10744">
    <property type="entry name" value="40S RIBOSOMAL PROTEIN S11 FAMILY MEMBER"/>
    <property type="match status" value="1"/>
</dbReference>
<dbReference type="PANTHER" id="PTHR10744:SF1">
    <property type="entry name" value="SMALL RIBOSOMAL SUBUNIT PROTEIN US17M"/>
    <property type="match status" value="1"/>
</dbReference>
<dbReference type="Pfam" id="PF00366">
    <property type="entry name" value="Ribosomal_S17"/>
    <property type="match status" value="1"/>
</dbReference>
<dbReference type="PRINTS" id="PR00973">
    <property type="entry name" value="RIBOSOMALS17"/>
</dbReference>
<dbReference type="SUPFAM" id="SSF50249">
    <property type="entry name" value="Nucleic acid-binding proteins"/>
    <property type="match status" value="1"/>
</dbReference>
<dbReference type="PROSITE" id="PS00056">
    <property type="entry name" value="RIBOSOMAL_S17"/>
    <property type="match status" value="1"/>
</dbReference>
<accession>P0A4B3</accession>
<accession>Q9WW03</accession>
<organism>
    <name type="scientific">Streptococcus pneumoniae serotype 4 (strain ATCC BAA-334 / TIGR4)</name>
    <dbReference type="NCBI Taxonomy" id="170187"/>
    <lineage>
        <taxon>Bacteria</taxon>
        <taxon>Bacillati</taxon>
        <taxon>Bacillota</taxon>
        <taxon>Bacilli</taxon>
        <taxon>Lactobacillales</taxon>
        <taxon>Streptococcaceae</taxon>
        <taxon>Streptococcus</taxon>
    </lineage>
</organism>
<name>RS17_STRPN</name>
<gene>
    <name evidence="1" type="primary">rpsQ</name>
    <name type="ordered locus">SP_0218</name>
</gene>
<reference key="1">
    <citation type="journal article" date="2000" name="Antimicrob. Agents Chemother.">
        <title>Mutations in ribosomal protein L16 conferring reduced susceptibility to evernimicin (SCH27899): implications for mechanism of action.</title>
        <authorList>
            <person name="Adrian P.V."/>
            <person name="Zhao W."/>
            <person name="Black T.A."/>
            <person name="Shaw K.J."/>
            <person name="Hare R.S."/>
            <person name="Klugman K.P."/>
        </authorList>
    </citation>
    <scope>NUCLEOTIDE SEQUENCE [GENOMIC DNA]</scope>
    <source>
        <strain>SP#5</strain>
        <strain>ZR1</strain>
    </source>
</reference>
<reference key="2">
    <citation type="journal article" date="2001" name="Science">
        <title>Complete genome sequence of a virulent isolate of Streptococcus pneumoniae.</title>
        <authorList>
            <person name="Tettelin H."/>
            <person name="Nelson K.E."/>
            <person name="Paulsen I.T."/>
            <person name="Eisen J.A."/>
            <person name="Read T.D."/>
            <person name="Peterson S.N."/>
            <person name="Heidelberg J.F."/>
            <person name="DeBoy R.T."/>
            <person name="Haft D.H."/>
            <person name="Dodson R.J."/>
            <person name="Durkin A.S."/>
            <person name="Gwinn M.L."/>
            <person name="Kolonay J.F."/>
            <person name="Nelson W.C."/>
            <person name="Peterson J.D."/>
            <person name="Umayam L.A."/>
            <person name="White O."/>
            <person name="Salzberg S.L."/>
            <person name="Lewis M.R."/>
            <person name="Radune D."/>
            <person name="Holtzapple E.K."/>
            <person name="Khouri H.M."/>
            <person name="Wolf A.M."/>
            <person name="Utterback T.R."/>
            <person name="Hansen C.L."/>
            <person name="McDonald L.A."/>
            <person name="Feldblyum T.V."/>
            <person name="Angiuoli S.V."/>
            <person name="Dickinson T."/>
            <person name="Hickey E.K."/>
            <person name="Holt I.E."/>
            <person name="Loftus B.J."/>
            <person name="Yang F."/>
            <person name="Smith H.O."/>
            <person name="Venter J.C."/>
            <person name="Dougherty B.A."/>
            <person name="Morrison D.A."/>
            <person name="Hollingshead S.K."/>
            <person name="Fraser C.M."/>
        </authorList>
    </citation>
    <scope>NUCLEOTIDE SEQUENCE [LARGE SCALE GENOMIC DNA]</scope>
    <source>
        <strain>ATCC BAA-334 / TIGR4</strain>
    </source>
</reference>
<protein>
    <recommendedName>
        <fullName evidence="1">Small ribosomal subunit protein uS17</fullName>
    </recommendedName>
    <alternativeName>
        <fullName evidence="2">30S ribosomal protein S17</fullName>
    </alternativeName>
</protein>
<evidence type="ECO:0000255" key="1">
    <source>
        <dbReference type="HAMAP-Rule" id="MF_01345"/>
    </source>
</evidence>
<evidence type="ECO:0000305" key="2"/>
<sequence>MERNNRKVLVGRVVSDKMDKTITVVVETKRNHPVYGKRINYSKKYKAHDENNVAKEGDIVRIMETRPLSATKRFRLVEVVEEAVII</sequence>
<comment type="function">
    <text evidence="1">One of the primary rRNA binding proteins, it binds specifically to the 5'-end of 16S ribosomal RNA.</text>
</comment>
<comment type="subunit">
    <text evidence="1">Part of the 30S ribosomal subunit.</text>
</comment>
<comment type="similarity">
    <text evidence="1">Belongs to the universal ribosomal protein uS17 family.</text>
</comment>
<proteinExistence type="inferred from homology"/>
<keyword id="KW-1185">Reference proteome</keyword>
<keyword id="KW-0687">Ribonucleoprotein</keyword>
<keyword id="KW-0689">Ribosomal protein</keyword>
<keyword id="KW-0694">RNA-binding</keyword>
<keyword id="KW-0699">rRNA-binding</keyword>